<keyword id="KW-0328">Glycosyltransferase</keyword>
<keyword id="KW-0660">Purine salvage</keyword>
<keyword id="KW-1185">Reference proteome</keyword>
<keyword id="KW-0808">Transferase</keyword>
<protein>
    <recommendedName>
        <fullName evidence="1">S-methyl-5'-thioadenosine phosphorylase</fullName>
        <ecNumber evidence="1">2.4.2.28</ecNumber>
    </recommendedName>
    <alternativeName>
        <fullName evidence="1">5'-methylthioadenosine phosphorylase</fullName>
        <shortName evidence="1">MTA phosphorylase</shortName>
        <shortName evidence="1">MTAP</shortName>
    </alternativeName>
</protein>
<comment type="function">
    <text evidence="1">Catalyzes the reversible phosphorylation of S-methyl-5'-thioadenosine (MTA) to adenine and 5-methylthioribose-1-phosphate. Involved in the breakdown of MTA, a major by-product of polyamine biosynthesis. Responsible for the first step in the methionine salvage pathway after MTA has been generated from S-adenosylmethionine. Has broad substrate specificity with 6-aminopurine nucleosides as preferred substrates.</text>
</comment>
<comment type="catalytic activity">
    <reaction evidence="1">
        <text>S-methyl-5'-thioadenosine + phosphate = 5-(methylsulfanyl)-alpha-D-ribose 1-phosphate + adenine</text>
        <dbReference type="Rhea" id="RHEA:11852"/>
        <dbReference type="ChEBI" id="CHEBI:16708"/>
        <dbReference type="ChEBI" id="CHEBI:17509"/>
        <dbReference type="ChEBI" id="CHEBI:43474"/>
        <dbReference type="ChEBI" id="CHEBI:58533"/>
        <dbReference type="EC" id="2.4.2.28"/>
    </reaction>
</comment>
<comment type="pathway">
    <text evidence="1">Amino-acid biosynthesis; L-methionine biosynthesis via salvage pathway; S-methyl-5-thio-alpha-D-ribose 1-phosphate from S-methyl-5'-thioadenosine (phosphorylase route): step 1/1.</text>
</comment>
<comment type="subunit">
    <text evidence="1">Homohexamer. Dimer of a homotrimer.</text>
</comment>
<comment type="similarity">
    <text evidence="1">Belongs to the PNP/MTAP phosphorylase family. MTAP subfamily.</text>
</comment>
<accession>A1RXU2</accession>
<reference key="1">
    <citation type="journal article" date="2008" name="J. Bacteriol.">
        <title>Genome sequence of Thermofilum pendens reveals an exceptional loss of biosynthetic pathways without genome reduction.</title>
        <authorList>
            <person name="Anderson I."/>
            <person name="Rodriguez J."/>
            <person name="Susanti D."/>
            <person name="Porat I."/>
            <person name="Reich C."/>
            <person name="Ulrich L.E."/>
            <person name="Elkins J.G."/>
            <person name="Mavromatis K."/>
            <person name="Lykidis A."/>
            <person name="Kim E."/>
            <person name="Thompson L.S."/>
            <person name="Nolan M."/>
            <person name="Land M."/>
            <person name="Copeland A."/>
            <person name="Lapidus A."/>
            <person name="Lucas S."/>
            <person name="Detter C."/>
            <person name="Zhulin I.B."/>
            <person name="Olsen G.J."/>
            <person name="Whitman W."/>
            <person name="Mukhopadhyay B."/>
            <person name="Bristow J."/>
            <person name="Kyrpides N."/>
        </authorList>
    </citation>
    <scope>NUCLEOTIDE SEQUENCE [LARGE SCALE GENOMIC DNA]</scope>
    <source>
        <strain>DSM 2475 / Hrk 5</strain>
    </source>
</reference>
<organism>
    <name type="scientific">Thermofilum pendens (strain DSM 2475 / Hrk 5)</name>
    <dbReference type="NCBI Taxonomy" id="368408"/>
    <lineage>
        <taxon>Archaea</taxon>
        <taxon>Thermoproteota</taxon>
        <taxon>Thermoprotei</taxon>
        <taxon>Thermofilales</taxon>
        <taxon>Thermofilaceae</taxon>
        <taxon>Thermofilum</taxon>
    </lineage>
</organism>
<feature type="chain" id="PRO_0000415110" description="S-methyl-5'-thioadenosine phosphorylase">
    <location>
        <begin position="1"/>
        <end position="262"/>
    </location>
</feature>
<feature type="binding site" evidence="1">
    <location>
        <position position="12"/>
    </location>
    <ligand>
        <name>phosphate</name>
        <dbReference type="ChEBI" id="CHEBI:43474"/>
    </ligand>
</feature>
<feature type="binding site" evidence="1">
    <location>
        <begin position="54"/>
        <end position="55"/>
    </location>
    <ligand>
        <name>phosphate</name>
        <dbReference type="ChEBI" id="CHEBI:43474"/>
    </ligand>
</feature>
<feature type="binding site" evidence="1">
    <location>
        <begin position="87"/>
        <end position="88"/>
    </location>
    <ligand>
        <name>phosphate</name>
        <dbReference type="ChEBI" id="CHEBI:43474"/>
    </ligand>
</feature>
<feature type="binding site" evidence="1">
    <location>
        <position position="185"/>
    </location>
    <ligand>
        <name>substrate</name>
    </ligand>
</feature>
<feature type="binding site" evidence="1">
    <location>
        <position position="186"/>
    </location>
    <ligand>
        <name>phosphate</name>
        <dbReference type="ChEBI" id="CHEBI:43474"/>
    </ligand>
</feature>
<feature type="binding site" evidence="1">
    <location>
        <begin position="209"/>
        <end position="211"/>
    </location>
    <ligand>
        <name>substrate</name>
    </ligand>
</feature>
<feature type="site" description="Important for substrate specificity" evidence="1">
    <location>
        <position position="167"/>
    </location>
</feature>
<feature type="site" description="Important for substrate specificity" evidence="1">
    <location>
        <position position="220"/>
    </location>
</feature>
<name>MTAP_THEPD</name>
<proteinExistence type="inferred from homology"/>
<gene>
    <name evidence="1" type="primary">mtnP</name>
    <name type="ordered locus">Tpen_0618</name>
</gene>
<dbReference type="EC" id="2.4.2.28" evidence="1"/>
<dbReference type="EMBL" id="CP000505">
    <property type="protein sequence ID" value="ABL78022.1"/>
    <property type="molecule type" value="Genomic_DNA"/>
</dbReference>
<dbReference type="RefSeq" id="WP_011752287.1">
    <property type="nucleotide sequence ID" value="NC_008698.1"/>
</dbReference>
<dbReference type="SMR" id="A1RXU2"/>
<dbReference type="STRING" id="368408.Tpen_0618"/>
<dbReference type="EnsemblBacteria" id="ABL78022">
    <property type="protein sequence ID" value="ABL78022"/>
    <property type="gene ID" value="Tpen_0618"/>
</dbReference>
<dbReference type="GeneID" id="4601324"/>
<dbReference type="KEGG" id="tpe:Tpen_0618"/>
<dbReference type="eggNOG" id="arCOG01327">
    <property type="taxonomic scope" value="Archaea"/>
</dbReference>
<dbReference type="HOGENOM" id="CLU_054456_0_2_2"/>
<dbReference type="OrthoDB" id="7681at2157"/>
<dbReference type="UniPathway" id="UPA00904">
    <property type="reaction ID" value="UER00873"/>
</dbReference>
<dbReference type="Proteomes" id="UP000000641">
    <property type="component" value="Chromosome"/>
</dbReference>
<dbReference type="GO" id="GO:0005829">
    <property type="term" value="C:cytosol"/>
    <property type="evidence" value="ECO:0007669"/>
    <property type="project" value="TreeGrafter"/>
</dbReference>
<dbReference type="GO" id="GO:0017061">
    <property type="term" value="F:S-methyl-5-thioadenosine phosphorylase activity"/>
    <property type="evidence" value="ECO:0007669"/>
    <property type="project" value="UniProtKB-UniRule"/>
</dbReference>
<dbReference type="GO" id="GO:0019509">
    <property type="term" value="P:L-methionine salvage from methylthioadenosine"/>
    <property type="evidence" value="ECO:0007669"/>
    <property type="project" value="UniProtKB-UniRule"/>
</dbReference>
<dbReference type="GO" id="GO:0006166">
    <property type="term" value="P:purine ribonucleoside salvage"/>
    <property type="evidence" value="ECO:0007669"/>
    <property type="project" value="UniProtKB-KW"/>
</dbReference>
<dbReference type="CDD" id="cd09010">
    <property type="entry name" value="MTAP_SsMTAPII_like_MTIP"/>
    <property type="match status" value="1"/>
</dbReference>
<dbReference type="FunFam" id="3.40.50.1580:FF:000012">
    <property type="entry name" value="Probable 6-oxopurine nucleoside phosphorylase"/>
    <property type="match status" value="1"/>
</dbReference>
<dbReference type="Gene3D" id="3.40.50.1580">
    <property type="entry name" value="Nucleoside phosphorylase domain"/>
    <property type="match status" value="1"/>
</dbReference>
<dbReference type="HAMAP" id="MF_01963">
    <property type="entry name" value="MTAP"/>
    <property type="match status" value="1"/>
</dbReference>
<dbReference type="InterPro" id="IPR010044">
    <property type="entry name" value="MTAP"/>
</dbReference>
<dbReference type="InterPro" id="IPR000845">
    <property type="entry name" value="Nucleoside_phosphorylase_d"/>
</dbReference>
<dbReference type="InterPro" id="IPR035994">
    <property type="entry name" value="Nucleoside_phosphorylase_sf"/>
</dbReference>
<dbReference type="InterPro" id="IPR018099">
    <property type="entry name" value="Purine_phosphorylase-2_CS"/>
</dbReference>
<dbReference type="NCBIfam" id="TIGR01694">
    <property type="entry name" value="MTAP"/>
    <property type="match status" value="1"/>
</dbReference>
<dbReference type="NCBIfam" id="NF006334">
    <property type="entry name" value="PRK08564.1"/>
    <property type="match status" value="1"/>
</dbReference>
<dbReference type="NCBIfam" id="NF006599">
    <property type="entry name" value="PRK09136.1"/>
    <property type="match status" value="1"/>
</dbReference>
<dbReference type="PANTHER" id="PTHR42679">
    <property type="entry name" value="S-METHYL-5'-THIOADENOSINE PHOSPHORYLASE"/>
    <property type="match status" value="1"/>
</dbReference>
<dbReference type="PANTHER" id="PTHR42679:SF3">
    <property type="entry name" value="S-METHYL-5'-THIOADENOSINE PHOSPHORYLASE"/>
    <property type="match status" value="1"/>
</dbReference>
<dbReference type="Pfam" id="PF01048">
    <property type="entry name" value="PNP_UDP_1"/>
    <property type="match status" value="1"/>
</dbReference>
<dbReference type="SUPFAM" id="SSF53167">
    <property type="entry name" value="Purine and uridine phosphorylases"/>
    <property type="match status" value="1"/>
</dbReference>
<dbReference type="PROSITE" id="PS01240">
    <property type="entry name" value="PNP_MTAP_2"/>
    <property type="match status" value="1"/>
</dbReference>
<evidence type="ECO:0000255" key="1">
    <source>
        <dbReference type="HAMAP-Rule" id="MF_01963"/>
    </source>
</evidence>
<sequence length="262" mass="29467">MEKVKIGIIGGSGLYSPDFLTNPKEEKIYTPYGPPSSHVVIGEIAGRKVAFIPRHGKRHEIPPHKVNYRANIYALKELGVERLISVSAVGSLREDYKPGDFVCTDQFIDMTKGRVYTFYDGPVVAHVSMADPFCPELRELCIRSARKLGITMHEKGTYICIEGPRFSTRAESRLWRQFGADIIGMTLVPEVNLAREARMCFLNIAMVTDYDVWAEKPVTAHEVARVMAENTEKVKRLLADLIPSIPEERKCQCARALDEALI</sequence>